<gene>
    <name type="primary">yvzF</name>
    <name type="ordered locus">BSU33049</name>
</gene>
<protein>
    <recommendedName>
        <fullName>Uncharacterized protein YvzF</fullName>
    </recommendedName>
</protein>
<reference key="1">
    <citation type="journal article" date="1997" name="Nature">
        <title>The complete genome sequence of the Gram-positive bacterium Bacillus subtilis.</title>
        <authorList>
            <person name="Kunst F."/>
            <person name="Ogasawara N."/>
            <person name="Moszer I."/>
            <person name="Albertini A.M."/>
            <person name="Alloni G."/>
            <person name="Azevedo V."/>
            <person name="Bertero M.G."/>
            <person name="Bessieres P."/>
            <person name="Bolotin A."/>
            <person name="Borchert S."/>
            <person name="Borriss R."/>
            <person name="Boursier L."/>
            <person name="Brans A."/>
            <person name="Braun M."/>
            <person name="Brignell S.C."/>
            <person name="Bron S."/>
            <person name="Brouillet S."/>
            <person name="Bruschi C.V."/>
            <person name="Caldwell B."/>
            <person name="Capuano V."/>
            <person name="Carter N.M."/>
            <person name="Choi S.-K."/>
            <person name="Codani J.-J."/>
            <person name="Connerton I.F."/>
            <person name="Cummings N.J."/>
            <person name="Daniel R.A."/>
            <person name="Denizot F."/>
            <person name="Devine K.M."/>
            <person name="Duesterhoeft A."/>
            <person name="Ehrlich S.D."/>
            <person name="Emmerson P.T."/>
            <person name="Entian K.-D."/>
            <person name="Errington J."/>
            <person name="Fabret C."/>
            <person name="Ferrari E."/>
            <person name="Foulger D."/>
            <person name="Fritz C."/>
            <person name="Fujita M."/>
            <person name="Fujita Y."/>
            <person name="Fuma S."/>
            <person name="Galizzi A."/>
            <person name="Galleron N."/>
            <person name="Ghim S.-Y."/>
            <person name="Glaser P."/>
            <person name="Goffeau A."/>
            <person name="Golightly E.J."/>
            <person name="Grandi G."/>
            <person name="Guiseppi G."/>
            <person name="Guy B.J."/>
            <person name="Haga K."/>
            <person name="Haiech J."/>
            <person name="Harwood C.R."/>
            <person name="Henaut A."/>
            <person name="Hilbert H."/>
            <person name="Holsappel S."/>
            <person name="Hosono S."/>
            <person name="Hullo M.-F."/>
            <person name="Itaya M."/>
            <person name="Jones L.-M."/>
            <person name="Joris B."/>
            <person name="Karamata D."/>
            <person name="Kasahara Y."/>
            <person name="Klaerr-Blanchard M."/>
            <person name="Klein C."/>
            <person name="Kobayashi Y."/>
            <person name="Koetter P."/>
            <person name="Koningstein G."/>
            <person name="Krogh S."/>
            <person name="Kumano M."/>
            <person name="Kurita K."/>
            <person name="Lapidus A."/>
            <person name="Lardinois S."/>
            <person name="Lauber J."/>
            <person name="Lazarevic V."/>
            <person name="Lee S.-M."/>
            <person name="Levine A."/>
            <person name="Liu H."/>
            <person name="Masuda S."/>
            <person name="Mauel C."/>
            <person name="Medigue C."/>
            <person name="Medina N."/>
            <person name="Mellado R.P."/>
            <person name="Mizuno M."/>
            <person name="Moestl D."/>
            <person name="Nakai S."/>
            <person name="Noback M."/>
            <person name="Noone D."/>
            <person name="O'Reilly M."/>
            <person name="Ogawa K."/>
            <person name="Ogiwara A."/>
            <person name="Oudega B."/>
            <person name="Park S.-H."/>
            <person name="Parro V."/>
            <person name="Pohl T.M."/>
            <person name="Portetelle D."/>
            <person name="Porwollik S."/>
            <person name="Prescott A.M."/>
            <person name="Presecan E."/>
            <person name="Pujic P."/>
            <person name="Purnelle B."/>
            <person name="Rapoport G."/>
            <person name="Rey M."/>
            <person name="Reynolds S."/>
            <person name="Rieger M."/>
            <person name="Rivolta C."/>
            <person name="Rocha E."/>
            <person name="Roche B."/>
            <person name="Rose M."/>
            <person name="Sadaie Y."/>
            <person name="Sato T."/>
            <person name="Scanlan E."/>
            <person name="Schleich S."/>
            <person name="Schroeter R."/>
            <person name="Scoffone F."/>
            <person name="Sekiguchi J."/>
            <person name="Sekowska A."/>
            <person name="Seror S.J."/>
            <person name="Serror P."/>
            <person name="Shin B.-S."/>
            <person name="Soldo B."/>
            <person name="Sorokin A."/>
            <person name="Tacconi E."/>
            <person name="Takagi T."/>
            <person name="Takahashi H."/>
            <person name="Takemaru K."/>
            <person name="Takeuchi M."/>
            <person name="Tamakoshi A."/>
            <person name="Tanaka T."/>
            <person name="Terpstra P."/>
            <person name="Tognoni A."/>
            <person name="Tosato V."/>
            <person name="Uchiyama S."/>
            <person name="Vandenbol M."/>
            <person name="Vannier F."/>
            <person name="Vassarotti A."/>
            <person name="Viari A."/>
            <person name="Wambutt R."/>
            <person name="Wedler E."/>
            <person name="Wedler H."/>
            <person name="Weitzenegger T."/>
            <person name="Winters P."/>
            <person name="Wipat A."/>
            <person name="Yamamoto H."/>
            <person name="Yamane K."/>
            <person name="Yasumoto K."/>
            <person name="Yata K."/>
            <person name="Yoshida K."/>
            <person name="Yoshikawa H.-F."/>
            <person name="Zumstein E."/>
            <person name="Yoshikawa H."/>
            <person name="Danchin A."/>
        </authorList>
    </citation>
    <scope>NUCLEOTIDE SEQUENCE [LARGE SCALE GENOMIC DNA]</scope>
    <source>
        <strain>168</strain>
    </source>
</reference>
<organism>
    <name type="scientific">Bacillus subtilis (strain 168)</name>
    <dbReference type="NCBI Taxonomy" id="224308"/>
    <lineage>
        <taxon>Bacteria</taxon>
        <taxon>Bacillati</taxon>
        <taxon>Bacillota</taxon>
        <taxon>Bacilli</taxon>
        <taxon>Bacillales</taxon>
        <taxon>Bacillaceae</taxon>
        <taxon>Bacillus</taxon>
    </lineage>
</organism>
<feature type="chain" id="PRO_0000380087" description="Uncharacterized protein YvzF">
    <location>
        <begin position="1"/>
        <end position="61"/>
    </location>
</feature>
<dbReference type="EMBL" id="AL009126">
    <property type="protein sequence ID" value="CAX52692.1"/>
    <property type="molecule type" value="Genomic_DNA"/>
</dbReference>
<dbReference type="RefSeq" id="WP_003244599.1">
    <property type="nucleotide sequence ID" value="NZ_OZ025638.1"/>
</dbReference>
<dbReference type="RefSeq" id="YP_003097786.1">
    <property type="nucleotide sequence ID" value="NC_000964.3"/>
</dbReference>
<dbReference type="SMR" id="C0H3R3"/>
<dbReference type="FunCoup" id="C0H3R3">
    <property type="interactions" value="64"/>
</dbReference>
<dbReference type="STRING" id="224308.BSU33049"/>
<dbReference type="PaxDb" id="224308-BSU33049"/>
<dbReference type="EnsemblBacteria" id="CAX52692">
    <property type="protein sequence ID" value="CAX52692"/>
    <property type="gene ID" value="BSU_33049"/>
</dbReference>
<dbReference type="GeneID" id="8303152"/>
<dbReference type="KEGG" id="bsu:BSU33049"/>
<dbReference type="PATRIC" id="fig|224308.179.peg.3582"/>
<dbReference type="eggNOG" id="ENOG50328V9">
    <property type="taxonomic scope" value="Bacteria"/>
</dbReference>
<dbReference type="InParanoid" id="C0H3R3"/>
<dbReference type="OrthoDB" id="2889230at2"/>
<dbReference type="BioCyc" id="BSUB:BSU33049-MONOMER"/>
<dbReference type="Proteomes" id="UP000001570">
    <property type="component" value="Chromosome"/>
</dbReference>
<dbReference type="InterPro" id="IPR025088">
    <property type="entry name" value="DUF3970"/>
</dbReference>
<dbReference type="Pfam" id="PF13113">
    <property type="entry name" value="DUF3970"/>
    <property type="match status" value="1"/>
</dbReference>
<name>YVZF_BACSU</name>
<sequence length="61" mass="7303">MAQVRLAGKQEEIEQLIRSFEQHYDVSYTSKEYGRTNPKYKYSKDSRVYLELKLKSAKIEK</sequence>
<keyword id="KW-1185">Reference proteome</keyword>
<proteinExistence type="predicted"/>
<accession>C0H3R3</accession>